<evidence type="ECO:0000250" key="1"/>
<evidence type="ECO:0000255" key="2"/>
<evidence type="ECO:0000256" key="3">
    <source>
        <dbReference type="SAM" id="MobiDB-lite"/>
    </source>
</evidence>
<evidence type="ECO:0000305" key="4"/>
<keyword id="KW-0325">Glycoprotein</keyword>
<keyword id="KW-0472">Membrane</keyword>
<keyword id="KW-1185">Reference proteome</keyword>
<keyword id="KW-0812">Transmembrane</keyword>
<keyword id="KW-1133">Transmembrane helix</keyword>
<keyword id="KW-0813">Transport</keyword>
<keyword id="KW-0926">Vacuole</keyword>
<accession>Q4IM48</accession>
<accession>A0A098D4K5</accession>
<accession>A0A0E0RRL4</accession>
<accession>V6QZE8</accession>
<comment type="function">
    <text evidence="1">Probable transporter.</text>
</comment>
<comment type="subcellular location">
    <subcellularLocation>
        <location evidence="1">Vacuole membrane</location>
        <topology evidence="1">Multi-pass membrane protein</topology>
    </subcellularLocation>
</comment>
<comment type="similarity">
    <text evidence="4">Belongs to the major facilitator superfamily.</text>
</comment>
<gene>
    <name type="primary">MCH1</name>
    <name type="ORF">FGRRES_01710</name>
    <name type="ORF">FGSG_01710</name>
</gene>
<reference key="1">
    <citation type="journal article" date="2007" name="Science">
        <title>The Fusarium graminearum genome reveals a link between localized polymorphism and pathogen specialization.</title>
        <authorList>
            <person name="Cuomo C.A."/>
            <person name="Gueldener U."/>
            <person name="Xu J.-R."/>
            <person name="Trail F."/>
            <person name="Turgeon B.G."/>
            <person name="Di Pietro A."/>
            <person name="Walton J.D."/>
            <person name="Ma L.-J."/>
            <person name="Baker S.E."/>
            <person name="Rep M."/>
            <person name="Adam G."/>
            <person name="Antoniw J."/>
            <person name="Baldwin T."/>
            <person name="Calvo S.E."/>
            <person name="Chang Y.-L."/>
            <person name="DeCaprio D."/>
            <person name="Gale L.R."/>
            <person name="Gnerre S."/>
            <person name="Goswami R.S."/>
            <person name="Hammond-Kosack K."/>
            <person name="Harris L.J."/>
            <person name="Hilburn K."/>
            <person name="Kennell J.C."/>
            <person name="Kroken S."/>
            <person name="Magnuson J.K."/>
            <person name="Mannhaupt G."/>
            <person name="Mauceli E.W."/>
            <person name="Mewes H.-W."/>
            <person name="Mitterbauer R."/>
            <person name="Muehlbauer G."/>
            <person name="Muensterkoetter M."/>
            <person name="Nelson D."/>
            <person name="O'Donnell K."/>
            <person name="Ouellet T."/>
            <person name="Qi W."/>
            <person name="Quesneville H."/>
            <person name="Roncero M.I.G."/>
            <person name="Seong K.-Y."/>
            <person name="Tetko I.V."/>
            <person name="Urban M."/>
            <person name="Waalwijk C."/>
            <person name="Ward T.J."/>
            <person name="Yao J."/>
            <person name="Birren B.W."/>
            <person name="Kistler H.C."/>
        </authorList>
    </citation>
    <scope>NUCLEOTIDE SEQUENCE [LARGE SCALE GENOMIC DNA]</scope>
    <source>
        <strain>ATCC MYA-4620 / CBS 123657 / FGSC 9075 / NRRL 31084 / PH-1</strain>
    </source>
</reference>
<reference key="2">
    <citation type="journal article" date="2010" name="Nature">
        <title>Comparative genomics reveals mobile pathogenicity chromosomes in Fusarium.</title>
        <authorList>
            <person name="Ma L.-J."/>
            <person name="van der Does H.C."/>
            <person name="Borkovich K.A."/>
            <person name="Coleman J.J."/>
            <person name="Daboussi M.-J."/>
            <person name="Di Pietro A."/>
            <person name="Dufresne M."/>
            <person name="Freitag M."/>
            <person name="Grabherr M."/>
            <person name="Henrissat B."/>
            <person name="Houterman P.M."/>
            <person name="Kang S."/>
            <person name="Shim W.-B."/>
            <person name="Woloshuk C."/>
            <person name="Xie X."/>
            <person name="Xu J.-R."/>
            <person name="Antoniw J."/>
            <person name="Baker S.E."/>
            <person name="Bluhm B.H."/>
            <person name="Breakspear A."/>
            <person name="Brown D.W."/>
            <person name="Butchko R.A.E."/>
            <person name="Chapman S."/>
            <person name="Coulson R."/>
            <person name="Coutinho P.M."/>
            <person name="Danchin E.G.J."/>
            <person name="Diener A."/>
            <person name="Gale L.R."/>
            <person name="Gardiner D.M."/>
            <person name="Goff S."/>
            <person name="Hammond-Kosack K.E."/>
            <person name="Hilburn K."/>
            <person name="Hua-Van A."/>
            <person name="Jonkers W."/>
            <person name="Kazan K."/>
            <person name="Kodira C.D."/>
            <person name="Koehrsen M."/>
            <person name="Kumar L."/>
            <person name="Lee Y.-H."/>
            <person name="Li L."/>
            <person name="Manners J.M."/>
            <person name="Miranda-Saavedra D."/>
            <person name="Mukherjee M."/>
            <person name="Park G."/>
            <person name="Park J."/>
            <person name="Park S.-Y."/>
            <person name="Proctor R.H."/>
            <person name="Regev A."/>
            <person name="Ruiz-Roldan M.C."/>
            <person name="Sain D."/>
            <person name="Sakthikumar S."/>
            <person name="Sykes S."/>
            <person name="Schwartz D.C."/>
            <person name="Turgeon B.G."/>
            <person name="Wapinski I."/>
            <person name="Yoder O."/>
            <person name="Young S."/>
            <person name="Zeng Q."/>
            <person name="Zhou S."/>
            <person name="Galagan J."/>
            <person name="Cuomo C.A."/>
            <person name="Kistler H.C."/>
            <person name="Rep M."/>
        </authorList>
    </citation>
    <scope>GENOME REANNOTATION</scope>
    <source>
        <strain>ATCC MYA-4620 / CBS 123657 / FGSC 9075 / NRRL 31084 / PH-1</strain>
    </source>
</reference>
<reference key="3">
    <citation type="journal article" date="2015" name="BMC Genomics">
        <title>The completed genome sequence of the pathogenic ascomycete fungus Fusarium graminearum.</title>
        <authorList>
            <person name="King R."/>
            <person name="Urban M."/>
            <person name="Hammond-Kosack M.C.U."/>
            <person name="Hassani-Pak K."/>
            <person name="Hammond-Kosack K.E."/>
        </authorList>
    </citation>
    <scope>NUCLEOTIDE SEQUENCE [LARGE SCALE GENOMIC DNA]</scope>
    <source>
        <strain>ATCC MYA-4620 / CBS 123657 / FGSC 9075 / NRRL 31084 / PH-1</strain>
    </source>
</reference>
<name>MCH1_GIBZE</name>
<sequence>MSSSAPDDTQASRLDADQISTRSSSYASDNDTDSTETRIQRNKEKQAIRLLAFISANIIALACGSIVVFSLYAPLLQSRLHYSQFQVNAVAISGSVALYLPISGVGYICDRVGLKPLALTGGILFGSGYGLAAGVYRKLDLEYRSHPEYRVDNDWSLPFLMLSFVFVGVATCCLYMAAVSSCAKNFGKGRYRGLALATPITCFGLSPMWLSQAGTRLFTETRPDGSKGDLDVFRFFLFLAALTFFMGILGTFTLRVVDEDELIDEAIEELEQSGLLDGSSLLGRTERSYGATGEETESSALLDPSKDNAKWKKNWVLNAETRSFLADRTMWPFALAFLLIVGPGEAFINNLGTIIGTLTPPEMEGWSHRTSAATHVSIFGITNTASRIFIGTLTDLLAPYPHTQHVQGPSTRSAVSSRFSISRVAFMAFFASMLSIGLLILASGLVQNHAERFWLVSGLVGAGYGAIFSLTPLMVTIIWGVENFATNYGLIGMLPAAGSTFWGLVYSATYQNGANKSKAGPEGSDRDDLFCYGEQCYAPTYWAETITVWIAVGLLLWAWKGRGGWSQRGIII</sequence>
<proteinExistence type="inferred from homology"/>
<protein>
    <recommendedName>
        <fullName>Probable transporter MCH1</fullName>
    </recommendedName>
</protein>
<dbReference type="EMBL" id="DS231663">
    <property type="protein sequence ID" value="ESU07057.1"/>
    <property type="molecule type" value="Genomic_DNA"/>
</dbReference>
<dbReference type="EMBL" id="HG970332">
    <property type="protein sequence ID" value="CEF73889.1"/>
    <property type="molecule type" value="Genomic_DNA"/>
</dbReference>
<dbReference type="RefSeq" id="XP_011317542.1">
    <property type="nucleotide sequence ID" value="XM_011319240.1"/>
</dbReference>
<dbReference type="SMR" id="Q4IM48"/>
<dbReference type="FunCoup" id="Q4IM48">
    <property type="interactions" value="18"/>
</dbReference>
<dbReference type="GlyCosmos" id="Q4IM48">
    <property type="glycosylation" value="2 sites, No reported glycans"/>
</dbReference>
<dbReference type="GeneID" id="23549134"/>
<dbReference type="KEGG" id="fgr:FGSG_01710"/>
<dbReference type="VEuPathDB" id="FungiDB:FGRAMPH1_01G04163"/>
<dbReference type="eggNOG" id="ENOG502S0C9">
    <property type="taxonomic scope" value="Eukaryota"/>
</dbReference>
<dbReference type="HOGENOM" id="CLU_012596_2_0_1"/>
<dbReference type="InParanoid" id="Q4IM48"/>
<dbReference type="OrthoDB" id="80684at110618"/>
<dbReference type="Proteomes" id="UP000070720">
    <property type="component" value="Chromosome 1"/>
</dbReference>
<dbReference type="GO" id="GO:0000329">
    <property type="term" value="C:fungal-type vacuole membrane"/>
    <property type="evidence" value="ECO:0007669"/>
    <property type="project" value="TreeGrafter"/>
</dbReference>
<dbReference type="GO" id="GO:0022857">
    <property type="term" value="F:transmembrane transporter activity"/>
    <property type="evidence" value="ECO:0007669"/>
    <property type="project" value="InterPro"/>
</dbReference>
<dbReference type="CDD" id="cd17354">
    <property type="entry name" value="MFS_Mch1p_like"/>
    <property type="match status" value="1"/>
</dbReference>
<dbReference type="Gene3D" id="1.20.1250.20">
    <property type="entry name" value="MFS general substrate transporter like domains"/>
    <property type="match status" value="1"/>
</dbReference>
<dbReference type="InterPro" id="IPR011701">
    <property type="entry name" value="MFS"/>
</dbReference>
<dbReference type="InterPro" id="IPR036259">
    <property type="entry name" value="MFS_trans_sf"/>
</dbReference>
<dbReference type="PANTHER" id="PTHR21576:SF45">
    <property type="entry name" value="TRANSPORTER MCH1-RELATED"/>
    <property type="match status" value="1"/>
</dbReference>
<dbReference type="PANTHER" id="PTHR21576">
    <property type="entry name" value="UNCHARACTERIZED NODULIN-LIKE PROTEIN"/>
    <property type="match status" value="1"/>
</dbReference>
<dbReference type="Pfam" id="PF07690">
    <property type="entry name" value="MFS_1"/>
    <property type="match status" value="1"/>
</dbReference>
<dbReference type="SUPFAM" id="SSF103473">
    <property type="entry name" value="MFS general substrate transporter"/>
    <property type="match status" value="1"/>
</dbReference>
<organism>
    <name type="scientific">Gibberella zeae (strain ATCC MYA-4620 / CBS 123657 / FGSC 9075 / NRRL 31084 / PH-1)</name>
    <name type="common">Wheat head blight fungus</name>
    <name type="synonym">Fusarium graminearum</name>
    <dbReference type="NCBI Taxonomy" id="229533"/>
    <lineage>
        <taxon>Eukaryota</taxon>
        <taxon>Fungi</taxon>
        <taxon>Dikarya</taxon>
        <taxon>Ascomycota</taxon>
        <taxon>Pezizomycotina</taxon>
        <taxon>Sordariomycetes</taxon>
        <taxon>Hypocreomycetidae</taxon>
        <taxon>Hypocreales</taxon>
        <taxon>Nectriaceae</taxon>
        <taxon>Fusarium</taxon>
    </lineage>
</organism>
<feature type="chain" id="PRO_0000084872" description="Probable transporter MCH1">
    <location>
        <begin position="1"/>
        <end position="572"/>
    </location>
</feature>
<feature type="transmembrane region" description="Helical" evidence="2">
    <location>
        <begin position="50"/>
        <end position="70"/>
    </location>
</feature>
<feature type="transmembrane region" description="Helical" evidence="2">
    <location>
        <begin position="89"/>
        <end position="109"/>
    </location>
</feature>
<feature type="transmembrane region" description="Helical" evidence="2">
    <location>
        <begin position="116"/>
        <end position="136"/>
    </location>
</feature>
<feature type="transmembrane region" description="Helical" evidence="2">
    <location>
        <begin position="159"/>
        <end position="179"/>
    </location>
</feature>
<feature type="transmembrane region" description="Helical" evidence="2">
    <location>
        <begin position="193"/>
        <end position="213"/>
    </location>
</feature>
<feature type="transmembrane region" description="Helical" evidence="2">
    <location>
        <begin position="232"/>
        <end position="252"/>
    </location>
</feature>
<feature type="transmembrane region" description="Helical" evidence="2">
    <location>
        <begin position="335"/>
        <end position="355"/>
    </location>
</feature>
<feature type="transmembrane region" description="Helical" evidence="2">
    <location>
        <begin position="426"/>
        <end position="446"/>
    </location>
</feature>
<feature type="transmembrane region" description="Helical" evidence="2">
    <location>
        <begin position="459"/>
        <end position="479"/>
    </location>
</feature>
<feature type="transmembrane region" description="Helical" evidence="2">
    <location>
        <begin position="488"/>
        <end position="508"/>
    </location>
</feature>
<feature type="transmembrane region" description="Helical" evidence="2">
    <location>
        <begin position="539"/>
        <end position="559"/>
    </location>
</feature>
<feature type="region of interest" description="Disordered" evidence="3">
    <location>
        <begin position="1"/>
        <end position="39"/>
    </location>
</feature>
<feature type="compositionally biased region" description="Polar residues" evidence="3">
    <location>
        <begin position="1"/>
        <end position="29"/>
    </location>
</feature>
<feature type="glycosylation site" description="N-linked (GlcNAc...) asparagine" evidence="2">
    <location>
        <position position="30"/>
    </location>
</feature>
<feature type="glycosylation site" description="N-linked (GlcNAc...) asparagine" evidence="2">
    <location>
        <position position="515"/>
    </location>
</feature>